<dbReference type="EC" id="3.1.-.-" evidence="1"/>
<dbReference type="EC" id="5.6.2.4" evidence="1"/>
<dbReference type="EMBL" id="CP000885">
    <property type="protein sequence ID" value="ABX43776.1"/>
    <property type="molecule type" value="Genomic_DNA"/>
</dbReference>
<dbReference type="RefSeq" id="WP_012201425.1">
    <property type="nucleotide sequence ID" value="NC_010001.1"/>
</dbReference>
<dbReference type="SMR" id="A9KTE6"/>
<dbReference type="STRING" id="357809.Cphy_3423"/>
<dbReference type="KEGG" id="cpy:Cphy_3423"/>
<dbReference type="eggNOG" id="COG1074">
    <property type="taxonomic scope" value="Bacteria"/>
</dbReference>
<dbReference type="HOGENOM" id="CLU_001114_3_1_9"/>
<dbReference type="OrthoDB" id="9810135at2"/>
<dbReference type="Proteomes" id="UP000000370">
    <property type="component" value="Chromosome"/>
</dbReference>
<dbReference type="GO" id="GO:0005829">
    <property type="term" value="C:cytosol"/>
    <property type="evidence" value="ECO:0007669"/>
    <property type="project" value="TreeGrafter"/>
</dbReference>
<dbReference type="GO" id="GO:0033202">
    <property type="term" value="C:DNA helicase complex"/>
    <property type="evidence" value="ECO:0007669"/>
    <property type="project" value="TreeGrafter"/>
</dbReference>
<dbReference type="GO" id="GO:0043138">
    <property type="term" value="F:3'-5' DNA helicase activity"/>
    <property type="evidence" value="ECO:0007669"/>
    <property type="project" value="UniProtKB-UniRule"/>
</dbReference>
<dbReference type="GO" id="GO:0008408">
    <property type="term" value="F:3'-5' exonuclease activity"/>
    <property type="evidence" value="ECO:0007669"/>
    <property type="project" value="UniProtKB-UniRule"/>
</dbReference>
<dbReference type="GO" id="GO:0005524">
    <property type="term" value="F:ATP binding"/>
    <property type="evidence" value="ECO:0007669"/>
    <property type="project" value="UniProtKB-UniRule"/>
</dbReference>
<dbReference type="GO" id="GO:0016887">
    <property type="term" value="F:ATP hydrolysis activity"/>
    <property type="evidence" value="ECO:0007669"/>
    <property type="project" value="RHEA"/>
</dbReference>
<dbReference type="GO" id="GO:0003690">
    <property type="term" value="F:double-stranded DNA binding"/>
    <property type="evidence" value="ECO:0007669"/>
    <property type="project" value="UniProtKB-UniRule"/>
</dbReference>
<dbReference type="GO" id="GO:0000724">
    <property type="term" value="P:double-strand break repair via homologous recombination"/>
    <property type="evidence" value="ECO:0007669"/>
    <property type="project" value="UniProtKB-UniRule"/>
</dbReference>
<dbReference type="FunFam" id="3.40.50.300:FF:001236">
    <property type="entry name" value="ATP-dependent helicase/nuclease subunit A"/>
    <property type="match status" value="1"/>
</dbReference>
<dbReference type="Gene3D" id="3.90.320.10">
    <property type="match status" value="1"/>
</dbReference>
<dbReference type="Gene3D" id="3.40.50.300">
    <property type="entry name" value="P-loop containing nucleotide triphosphate hydrolases"/>
    <property type="match status" value="4"/>
</dbReference>
<dbReference type="Gene3D" id="1.10.486.10">
    <property type="entry name" value="PCRA, domain 4"/>
    <property type="match status" value="1"/>
</dbReference>
<dbReference type="HAMAP" id="MF_01451">
    <property type="entry name" value="AddA"/>
    <property type="match status" value="1"/>
</dbReference>
<dbReference type="InterPro" id="IPR014152">
    <property type="entry name" value="AddA"/>
</dbReference>
<dbReference type="InterPro" id="IPR014017">
    <property type="entry name" value="DNA_helicase_UvrD-like_C"/>
</dbReference>
<dbReference type="InterPro" id="IPR000212">
    <property type="entry name" value="DNA_helicase_UvrD/REP"/>
</dbReference>
<dbReference type="InterPro" id="IPR027417">
    <property type="entry name" value="P-loop_NTPase"/>
</dbReference>
<dbReference type="InterPro" id="IPR011604">
    <property type="entry name" value="PDDEXK-like_dom_sf"/>
</dbReference>
<dbReference type="InterPro" id="IPR038726">
    <property type="entry name" value="PDDEXK_AddAB-type"/>
</dbReference>
<dbReference type="InterPro" id="IPR011335">
    <property type="entry name" value="Restrct_endonuc-II-like"/>
</dbReference>
<dbReference type="InterPro" id="IPR014016">
    <property type="entry name" value="UvrD-like_ATP-bd"/>
</dbReference>
<dbReference type="NCBIfam" id="TIGR02785">
    <property type="entry name" value="addA_Gpos"/>
    <property type="match status" value="1"/>
</dbReference>
<dbReference type="PANTHER" id="PTHR11070:SF48">
    <property type="entry name" value="ATP-DEPENDENT HELICASE_NUCLEASE SUBUNIT A"/>
    <property type="match status" value="1"/>
</dbReference>
<dbReference type="PANTHER" id="PTHR11070">
    <property type="entry name" value="UVRD / RECB / PCRA DNA HELICASE FAMILY MEMBER"/>
    <property type="match status" value="1"/>
</dbReference>
<dbReference type="Pfam" id="PF12705">
    <property type="entry name" value="PDDEXK_1"/>
    <property type="match status" value="1"/>
</dbReference>
<dbReference type="Pfam" id="PF00580">
    <property type="entry name" value="UvrD-helicase"/>
    <property type="match status" value="1"/>
</dbReference>
<dbReference type="Pfam" id="PF13361">
    <property type="entry name" value="UvrD_C"/>
    <property type="match status" value="1"/>
</dbReference>
<dbReference type="SUPFAM" id="SSF52540">
    <property type="entry name" value="P-loop containing nucleoside triphosphate hydrolases"/>
    <property type="match status" value="1"/>
</dbReference>
<dbReference type="SUPFAM" id="SSF52980">
    <property type="entry name" value="Restriction endonuclease-like"/>
    <property type="match status" value="1"/>
</dbReference>
<dbReference type="PROSITE" id="PS51198">
    <property type="entry name" value="UVRD_HELICASE_ATP_BIND"/>
    <property type="match status" value="1"/>
</dbReference>
<dbReference type="PROSITE" id="PS51217">
    <property type="entry name" value="UVRD_HELICASE_CTER"/>
    <property type="match status" value="1"/>
</dbReference>
<feature type="chain" id="PRO_0000379264" description="ATP-dependent helicase/nuclease subunit A">
    <location>
        <begin position="1"/>
        <end position="1377"/>
    </location>
</feature>
<feature type="domain" description="UvrD-like helicase ATP-binding" evidence="1">
    <location>
        <begin position="4"/>
        <end position="478"/>
    </location>
</feature>
<feature type="domain" description="UvrD-like helicase C-terminal" evidence="1">
    <location>
        <begin position="526"/>
        <end position="867"/>
    </location>
</feature>
<feature type="region of interest" description="Disordered" evidence="2">
    <location>
        <begin position="1036"/>
        <end position="1072"/>
    </location>
</feature>
<feature type="compositionally biased region" description="Acidic residues" evidence="2">
    <location>
        <begin position="1036"/>
        <end position="1065"/>
    </location>
</feature>
<feature type="binding site" evidence="1">
    <location>
        <begin position="25"/>
        <end position="32"/>
    </location>
    <ligand>
        <name>ATP</name>
        <dbReference type="ChEBI" id="CHEBI:30616"/>
    </ligand>
</feature>
<protein>
    <recommendedName>
        <fullName evidence="1">ATP-dependent helicase/nuclease subunit A</fullName>
        <ecNumber evidence="1">3.1.-.-</ecNumber>
        <ecNumber evidence="1">5.6.2.4</ecNumber>
    </recommendedName>
    <alternativeName>
        <fullName evidence="1">ATP-dependent helicase/nuclease AddA</fullName>
    </alternativeName>
    <alternativeName>
        <fullName evidence="1">DNA 3'-5' helicase AddA</fullName>
    </alternativeName>
</protein>
<evidence type="ECO:0000255" key="1">
    <source>
        <dbReference type="HAMAP-Rule" id="MF_01451"/>
    </source>
</evidence>
<evidence type="ECO:0000256" key="2">
    <source>
        <dbReference type="SAM" id="MobiDB-lite"/>
    </source>
</evidence>
<comment type="function">
    <text evidence="1">The heterodimer acts as both an ATP-dependent DNA helicase and an ATP-dependent, dual-direction single-stranded exonuclease. Recognizes the chi site generating a DNA molecule suitable for the initiation of homologous recombination. The AddA nuclease domain is required for chi fragment generation; this subunit has the helicase and 3' -&gt; 5' nuclease activities.</text>
</comment>
<comment type="catalytic activity">
    <reaction evidence="1">
        <text>Couples ATP hydrolysis with the unwinding of duplex DNA by translocating in the 3'-5' direction.</text>
        <dbReference type="EC" id="5.6.2.4"/>
    </reaction>
</comment>
<comment type="catalytic activity">
    <reaction evidence="1">
        <text>ATP + H2O = ADP + phosphate + H(+)</text>
        <dbReference type="Rhea" id="RHEA:13065"/>
        <dbReference type="ChEBI" id="CHEBI:15377"/>
        <dbReference type="ChEBI" id="CHEBI:15378"/>
        <dbReference type="ChEBI" id="CHEBI:30616"/>
        <dbReference type="ChEBI" id="CHEBI:43474"/>
        <dbReference type="ChEBI" id="CHEBI:456216"/>
        <dbReference type="EC" id="5.6.2.4"/>
    </reaction>
</comment>
<comment type="cofactor">
    <cofactor evidence="1">
        <name>Mg(2+)</name>
        <dbReference type="ChEBI" id="CHEBI:18420"/>
    </cofactor>
</comment>
<comment type="subunit">
    <text evidence="1">Heterodimer of AddA and AddB/RexB.</text>
</comment>
<comment type="similarity">
    <text evidence="1">Belongs to the helicase family. AddA subfamily.</text>
</comment>
<sequence>MAKTSWTPGQQKVIDTRDCNLLVSAAAGSGKTAVLVERIINRITSENSPINIDQLLIVTFTKAAAGEMRERIGAAIEKKVLEQPDNVHLQKQLTLLYSAQITTIDSFCLSVIRNHFHTIDLDPSFRIAEEAELMLLKSDVLATLLEEKYEEGAEDFLEFVECYSASKSDEPIENFILKLYQFSQSYPYPHEWLEEREKDFLVETAEDINQTSWMKQLLQYVKAILREASDLCAKAIEITNYPDGPKPYLDALLSDQEIIERLLNSDAGSQHSYEEYQDAFSNITFARLSTKKWPDATEERKEEVKAIRQMVKKILSDLSDDFFFQPMEDMLTDMRKVRRPMLVLLSLTHDFLERLDASKEENNLVDFSDIEHFALNILVTKEDGNLVPTKVATEMSEQFVEIMIDEYQDSNYVQEYILSSISKVTRGCPNVFMVGDVKQSIYKFRMARPELFMEKYEQYSTEEGLYRRIDLSKNFRSRAEVLDSINGVFEKIMTKAMGGIEYTKEVSLYPGAQFPEIGMDLDNTSFLFSDTKTELIILDLKEEEASIPDSMDRLDVMALEEDAIELSKRELEAKAVAMRIKQLVHGERGFSVTKRNGEEQDLKRCQYRDIVILLRTMSGWSETFTEILKQEGIPAYSDTQTGYFQTLEVKTVLNYLRILDNPRQDAPLTAILYSPIVGLSAEQLSFLRVKPGKGAEKLSIYDAARECALNYLEIQDEVTQPEETQPVYDSIIQADLMYEKSSAEKTVSMDKNLIETGEKLKRFFATYDKLREKAIYLPVHEIILEFFKETGYDLFVYAMPGGEQRRNNLNLLVQHALSFEESSYHGLFQFIRYIERLLKFEIDYGEAGGLSENDNAVRIMSIHKSKGLEFPVVILAGMGKQFNTMDAREKIVLHADYGIGPECIDYQLRTKCPTLLKQVIKKNIVLDNLGEELRVLYVALTRAKEKLIMIGSANDANDVFDKWRQDSTPGVTPLRFQTLAMAKDYFSFVGPAALYDSRIRVITLTPNDLLEDEYEKQTDIKNKQEELNPYNFLQSFEEESDEQSDEERSDEERSDGEQSDGEQSDGEQPRKDLLTKLSFRYPYEHEAMLPIKTTVSELKKLSQQVDEELTETFTQVKDELTKTWPQVDEELTEKYPQVEELIETSPPVKEESQMLIEPTIPKFLKEEKELRGTERGNLYHKILELIDFSDNKTKLNLREFVSQLANRGLIQEESISSINFERLSRFFESELYQRIQIAYQKGYLYREQPFVIGIPVREISTQKFVRTTQAQASSILSKNEDFSHANLCSCPNSQDYENDDLVLIQGIIDVYFEEEDGIVLVDYKTDAVGELGEEELIRRYQEQIRYYERALNQLLDKTVKEKIIYSFSLGKEIRIKS</sequence>
<gene>
    <name evidence="1" type="primary">addA</name>
    <name type="ordered locus">Cphy_3423</name>
</gene>
<organism>
    <name type="scientific">Lachnoclostridium phytofermentans (strain ATCC 700394 / DSM 18823 / ISDg)</name>
    <name type="common">Clostridium phytofermentans</name>
    <dbReference type="NCBI Taxonomy" id="357809"/>
    <lineage>
        <taxon>Bacteria</taxon>
        <taxon>Bacillati</taxon>
        <taxon>Bacillota</taxon>
        <taxon>Clostridia</taxon>
        <taxon>Lachnospirales</taxon>
        <taxon>Lachnospiraceae</taxon>
    </lineage>
</organism>
<reference key="1">
    <citation type="submission" date="2007-11" db="EMBL/GenBank/DDBJ databases">
        <title>Complete genome sequence of Clostridium phytofermentans ISDg.</title>
        <authorList>
            <person name="Leschine S.B."/>
            <person name="Warnick T.A."/>
            <person name="Blanchard J.L."/>
            <person name="Schnell D.J."/>
            <person name="Petit E.L."/>
            <person name="LaTouf W.G."/>
            <person name="Copeland A."/>
            <person name="Lucas S."/>
            <person name="Lapidus A."/>
            <person name="Barry K."/>
            <person name="Glavina del Rio T."/>
            <person name="Dalin E."/>
            <person name="Tice H."/>
            <person name="Pitluck S."/>
            <person name="Kiss H."/>
            <person name="Brettin T."/>
            <person name="Bruce D."/>
            <person name="Detter J.C."/>
            <person name="Han C."/>
            <person name="Kuske C."/>
            <person name="Schmutz J."/>
            <person name="Larimer F."/>
            <person name="Land M."/>
            <person name="Hauser L."/>
            <person name="Kyrpides N."/>
            <person name="Kim E.A."/>
            <person name="Richardson P."/>
        </authorList>
    </citation>
    <scope>NUCLEOTIDE SEQUENCE [LARGE SCALE GENOMIC DNA]</scope>
    <source>
        <strain>ATCC 700394 / DSM 18823 / ISDg</strain>
    </source>
</reference>
<keyword id="KW-0067">ATP-binding</keyword>
<keyword id="KW-0227">DNA damage</keyword>
<keyword id="KW-0234">DNA repair</keyword>
<keyword id="KW-0238">DNA-binding</keyword>
<keyword id="KW-0269">Exonuclease</keyword>
<keyword id="KW-0347">Helicase</keyword>
<keyword id="KW-0378">Hydrolase</keyword>
<keyword id="KW-0413">Isomerase</keyword>
<keyword id="KW-0540">Nuclease</keyword>
<keyword id="KW-0547">Nucleotide-binding</keyword>
<keyword id="KW-1185">Reference proteome</keyword>
<proteinExistence type="inferred from homology"/>
<name>ADDA_LACP7</name>
<accession>A9KTE6</accession>